<organism>
    <name type="scientific">Shigella boydii serotype 18 (strain CDC 3083-94 / BS512)</name>
    <dbReference type="NCBI Taxonomy" id="344609"/>
    <lineage>
        <taxon>Bacteria</taxon>
        <taxon>Pseudomonadati</taxon>
        <taxon>Pseudomonadota</taxon>
        <taxon>Gammaproteobacteria</taxon>
        <taxon>Enterobacterales</taxon>
        <taxon>Enterobacteriaceae</taxon>
        <taxon>Shigella</taxon>
    </lineage>
</organism>
<keyword id="KW-0028">Amino-acid biosynthesis</keyword>
<keyword id="KW-0057">Aromatic amino acid biosynthesis</keyword>
<keyword id="KW-0067">ATP-binding</keyword>
<keyword id="KW-0963">Cytoplasm</keyword>
<keyword id="KW-0418">Kinase</keyword>
<keyword id="KW-0460">Magnesium</keyword>
<keyword id="KW-0479">Metal-binding</keyword>
<keyword id="KW-0547">Nucleotide-binding</keyword>
<keyword id="KW-1185">Reference proteome</keyword>
<keyword id="KW-0808">Transferase</keyword>
<dbReference type="EC" id="2.7.1.71" evidence="1"/>
<dbReference type="EMBL" id="CP001063">
    <property type="protein sequence ID" value="ACD07548.1"/>
    <property type="molecule type" value="Genomic_DNA"/>
</dbReference>
<dbReference type="RefSeq" id="WP_000818618.1">
    <property type="nucleotide sequence ID" value="NC_010658.1"/>
</dbReference>
<dbReference type="SMR" id="B2U3J6"/>
<dbReference type="STRING" id="344609.SbBS512_E3767"/>
<dbReference type="GeneID" id="93778608"/>
<dbReference type="KEGG" id="sbc:SbBS512_E3767"/>
<dbReference type="HOGENOM" id="CLU_057607_2_2_6"/>
<dbReference type="UniPathway" id="UPA00053">
    <property type="reaction ID" value="UER00088"/>
</dbReference>
<dbReference type="Proteomes" id="UP000001030">
    <property type="component" value="Chromosome"/>
</dbReference>
<dbReference type="GO" id="GO:0005829">
    <property type="term" value="C:cytosol"/>
    <property type="evidence" value="ECO:0007669"/>
    <property type="project" value="TreeGrafter"/>
</dbReference>
<dbReference type="GO" id="GO:0005524">
    <property type="term" value="F:ATP binding"/>
    <property type="evidence" value="ECO:0007669"/>
    <property type="project" value="UniProtKB-UniRule"/>
</dbReference>
<dbReference type="GO" id="GO:0000287">
    <property type="term" value="F:magnesium ion binding"/>
    <property type="evidence" value="ECO:0007669"/>
    <property type="project" value="UniProtKB-UniRule"/>
</dbReference>
<dbReference type="GO" id="GO:0004765">
    <property type="term" value="F:shikimate kinase activity"/>
    <property type="evidence" value="ECO:0007669"/>
    <property type="project" value="UniProtKB-UniRule"/>
</dbReference>
<dbReference type="GO" id="GO:0008652">
    <property type="term" value="P:amino acid biosynthetic process"/>
    <property type="evidence" value="ECO:0007669"/>
    <property type="project" value="UniProtKB-KW"/>
</dbReference>
<dbReference type="GO" id="GO:0009073">
    <property type="term" value="P:aromatic amino acid family biosynthetic process"/>
    <property type="evidence" value="ECO:0007669"/>
    <property type="project" value="UniProtKB-KW"/>
</dbReference>
<dbReference type="GO" id="GO:0009423">
    <property type="term" value="P:chorismate biosynthetic process"/>
    <property type="evidence" value="ECO:0007669"/>
    <property type="project" value="UniProtKB-UniRule"/>
</dbReference>
<dbReference type="CDD" id="cd00464">
    <property type="entry name" value="SK"/>
    <property type="match status" value="1"/>
</dbReference>
<dbReference type="FunFam" id="3.40.50.300:FF:000099">
    <property type="entry name" value="Shikimate kinase 1"/>
    <property type="match status" value="1"/>
</dbReference>
<dbReference type="Gene3D" id="3.40.50.300">
    <property type="entry name" value="P-loop containing nucleotide triphosphate hydrolases"/>
    <property type="match status" value="1"/>
</dbReference>
<dbReference type="HAMAP" id="MF_00109">
    <property type="entry name" value="Shikimate_kinase"/>
    <property type="match status" value="1"/>
</dbReference>
<dbReference type="InterPro" id="IPR027417">
    <property type="entry name" value="P-loop_NTPase"/>
</dbReference>
<dbReference type="InterPro" id="IPR031322">
    <property type="entry name" value="Shikimate/glucono_kinase"/>
</dbReference>
<dbReference type="InterPro" id="IPR000623">
    <property type="entry name" value="Shikimate_kinase/TSH1"/>
</dbReference>
<dbReference type="InterPro" id="IPR023000">
    <property type="entry name" value="Shikimate_kinase_CS"/>
</dbReference>
<dbReference type="NCBIfam" id="NF003456">
    <property type="entry name" value="PRK05057.1"/>
    <property type="match status" value="1"/>
</dbReference>
<dbReference type="PANTHER" id="PTHR21087">
    <property type="entry name" value="SHIKIMATE KINASE"/>
    <property type="match status" value="1"/>
</dbReference>
<dbReference type="PANTHER" id="PTHR21087:SF16">
    <property type="entry name" value="SHIKIMATE KINASE 1, CHLOROPLASTIC"/>
    <property type="match status" value="1"/>
</dbReference>
<dbReference type="Pfam" id="PF01202">
    <property type="entry name" value="SKI"/>
    <property type="match status" value="1"/>
</dbReference>
<dbReference type="PRINTS" id="PR01100">
    <property type="entry name" value="SHIKIMTKNASE"/>
</dbReference>
<dbReference type="SUPFAM" id="SSF52540">
    <property type="entry name" value="P-loop containing nucleoside triphosphate hydrolases"/>
    <property type="match status" value="1"/>
</dbReference>
<dbReference type="PROSITE" id="PS01128">
    <property type="entry name" value="SHIKIMATE_KINASE"/>
    <property type="match status" value="1"/>
</dbReference>
<gene>
    <name evidence="1" type="primary">aroK</name>
    <name type="ordered locus">SbBS512_E3767</name>
</gene>
<accession>B2U3J6</accession>
<proteinExistence type="inferred from homology"/>
<protein>
    <recommendedName>
        <fullName evidence="1">Shikimate kinase 1</fullName>
        <shortName evidence="1">SK 1</shortName>
        <ecNumber evidence="1">2.7.1.71</ecNumber>
    </recommendedName>
</protein>
<name>AROK_SHIB3</name>
<sequence>MAEKRNIFLVGPMGAGKSTIGRQLAQQLNMEFYDSDQEIEKRTGADVGWVFDLEGEEGFRDREEKVINELTEKQGIVLATGGGSVKSRETRNRLSARGVVVYLETTIEKQLARTQRDKKRPLLHVETPPREVLEALANERNPLYEEIADVTIRTDDQSAKVVANQIIHMLESN</sequence>
<feature type="chain" id="PRO_1000094414" description="Shikimate kinase 1">
    <location>
        <begin position="1"/>
        <end position="173"/>
    </location>
</feature>
<feature type="binding site" evidence="1">
    <location>
        <begin position="14"/>
        <end position="19"/>
    </location>
    <ligand>
        <name>ATP</name>
        <dbReference type="ChEBI" id="CHEBI:30616"/>
    </ligand>
</feature>
<feature type="binding site" evidence="1">
    <location>
        <position position="18"/>
    </location>
    <ligand>
        <name>Mg(2+)</name>
        <dbReference type="ChEBI" id="CHEBI:18420"/>
    </ligand>
</feature>
<feature type="binding site" evidence="1">
    <location>
        <position position="36"/>
    </location>
    <ligand>
        <name>substrate</name>
    </ligand>
</feature>
<feature type="binding site" evidence="1">
    <location>
        <position position="60"/>
    </location>
    <ligand>
        <name>substrate</name>
    </ligand>
</feature>
<feature type="binding site" evidence="1">
    <location>
        <position position="82"/>
    </location>
    <ligand>
        <name>substrate</name>
    </ligand>
</feature>
<feature type="binding site" evidence="1">
    <location>
        <position position="120"/>
    </location>
    <ligand>
        <name>ATP</name>
        <dbReference type="ChEBI" id="CHEBI:30616"/>
    </ligand>
</feature>
<feature type="binding site" evidence="1">
    <location>
        <position position="140"/>
    </location>
    <ligand>
        <name>substrate</name>
    </ligand>
</feature>
<feature type="binding site" evidence="1">
    <location>
        <position position="157"/>
    </location>
    <ligand>
        <name>ATP</name>
        <dbReference type="ChEBI" id="CHEBI:30616"/>
    </ligand>
</feature>
<comment type="function">
    <text evidence="1">Catalyzes the specific phosphorylation of the 3-hydroxyl group of shikimic acid using ATP as a cosubstrate.</text>
</comment>
<comment type="catalytic activity">
    <reaction evidence="1">
        <text>shikimate + ATP = 3-phosphoshikimate + ADP + H(+)</text>
        <dbReference type="Rhea" id="RHEA:13121"/>
        <dbReference type="ChEBI" id="CHEBI:15378"/>
        <dbReference type="ChEBI" id="CHEBI:30616"/>
        <dbReference type="ChEBI" id="CHEBI:36208"/>
        <dbReference type="ChEBI" id="CHEBI:145989"/>
        <dbReference type="ChEBI" id="CHEBI:456216"/>
        <dbReference type="EC" id="2.7.1.71"/>
    </reaction>
</comment>
<comment type="cofactor">
    <cofactor evidence="1">
        <name>Mg(2+)</name>
        <dbReference type="ChEBI" id="CHEBI:18420"/>
    </cofactor>
    <text evidence="1">Binds 1 Mg(2+) ion per subunit.</text>
</comment>
<comment type="pathway">
    <text evidence="1">Metabolic intermediate biosynthesis; chorismate biosynthesis; chorismate from D-erythrose 4-phosphate and phosphoenolpyruvate: step 5/7.</text>
</comment>
<comment type="subunit">
    <text evidence="1">Monomer.</text>
</comment>
<comment type="subcellular location">
    <subcellularLocation>
        <location evidence="1">Cytoplasm</location>
    </subcellularLocation>
</comment>
<comment type="similarity">
    <text evidence="1">Belongs to the shikimate kinase family.</text>
</comment>
<evidence type="ECO:0000255" key="1">
    <source>
        <dbReference type="HAMAP-Rule" id="MF_00109"/>
    </source>
</evidence>
<reference key="1">
    <citation type="submission" date="2008-05" db="EMBL/GenBank/DDBJ databases">
        <title>Complete sequence of Shigella boydii serotype 18 strain BS512.</title>
        <authorList>
            <person name="Rasko D.A."/>
            <person name="Rosovitz M."/>
            <person name="Maurelli A.T."/>
            <person name="Myers G."/>
            <person name="Seshadri R."/>
            <person name="Cer R."/>
            <person name="Jiang L."/>
            <person name="Ravel J."/>
            <person name="Sebastian Y."/>
        </authorList>
    </citation>
    <scope>NUCLEOTIDE SEQUENCE [LARGE SCALE GENOMIC DNA]</scope>
    <source>
        <strain>CDC 3083-94 / BS512</strain>
    </source>
</reference>